<protein>
    <recommendedName>
        <fullName>Protein S100-A11</fullName>
    </recommendedName>
    <alternativeName>
        <fullName>Calgizzarin</fullName>
    </alternativeName>
    <alternativeName>
        <fullName>Protein S100-C</fullName>
    </alternativeName>
    <alternativeName>
        <fullName>S100 calcium-binding protein A11</fullName>
    </alternativeName>
</protein>
<evidence type="ECO:0000250" key="1"/>
<evidence type="ECO:0000250" key="2">
    <source>
        <dbReference type="UniProtKB" id="P31949"/>
    </source>
</evidence>
<evidence type="ECO:0000250" key="3">
    <source>
        <dbReference type="UniProtKB" id="P50543"/>
    </source>
</evidence>
<evidence type="ECO:0000255" key="4">
    <source>
        <dbReference type="PROSITE-ProRule" id="PRU00448"/>
    </source>
</evidence>
<evidence type="ECO:0000305" key="5"/>
<evidence type="ECO:0007829" key="6">
    <source>
        <dbReference type="PDB" id="1NSH"/>
    </source>
</evidence>
<proteinExistence type="evidence at protein level"/>
<organism>
    <name type="scientific">Oryctolagus cuniculus</name>
    <name type="common">Rabbit</name>
    <dbReference type="NCBI Taxonomy" id="9986"/>
    <lineage>
        <taxon>Eukaryota</taxon>
        <taxon>Metazoa</taxon>
        <taxon>Chordata</taxon>
        <taxon>Craniata</taxon>
        <taxon>Vertebrata</taxon>
        <taxon>Euteleostomi</taxon>
        <taxon>Mammalia</taxon>
        <taxon>Eutheria</taxon>
        <taxon>Euarchontoglires</taxon>
        <taxon>Glires</taxon>
        <taxon>Lagomorpha</taxon>
        <taxon>Leporidae</taxon>
        <taxon>Oryctolagus</taxon>
    </lineage>
</organism>
<keyword id="KW-0002">3D-structure</keyword>
<keyword id="KW-0007">Acetylation</keyword>
<keyword id="KW-0106">Calcium</keyword>
<keyword id="KW-0963">Cytoplasm</keyword>
<keyword id="KW-0903">Direct protein sequencing</keyword>
<keyword id="KW-1015">Disulfide bond</keyword>
<keyword id="KW-0479">Metal-binding</keyword>
<keyword id="KW-0539">Nucleus</keyword>
<keyword id="KW-0597">Phosphoprotein</keyword>
<keyword id="KW-1185">Reference proteome</keyword>
<keyword id="KW-0677">Repeat</keyword>
<accession>P24480</accession>
<gene>
    <name type="primary">S100A11</name>
    <name type="synonym">PCALG</name>
    <name type="synonym">S100C</name>
</gene>
<dbReference type="EMBL" id="D10586">
    <property type="protein sequence ID" value="BAA01443.1"/>
    <property type="molecule type" value="mRNA"/>
</dbReference>
<dbReference type="PIR" id="JQ1300">
    <property type="entry name" value="JQ1300"/>
</dbReference>
<dbReference type="RefSeq" id="NP_001075656.1">
    <property type="nucleotide sequence ID" value="NM_001082187.1"/>
</dbReference>
<dbReference type="PDB" id="1NSH">
    <property type="method" value="NMR"/>
    <property type="chains" value="A/B=2-102"/>
</dbReference>
<dbReference type="PDBsum" id="1NSH"/>
<dbReference type="BMRB" id="P24480"/>
<dbReference type="SMR" id="P24480"/>
<dbReference type="FunCoup" id="P24480">
    <property type="interactions" value="167"/>
</dbReference>
<dbReference type="PaxDb" id="9986-ENSOCUP00000004505"/>
<dbReference type="GeneID" id="100008975"/>
<dbReference type="KEGG" id="ocu:100008975"/>
<dbReference type="CTD" id="6282"/>
<dbReference type="eggNOG" id="ENOG502SS6H">
    <property type="taxonomic scope" value="Eukaryota"/>
</dbReference>
<dbReference type="InParanoid" id="P24480"/>
<dbReference type="OrthoDB" id="9451669at2759"/>
<dbReference type="EvolutionaryTrace" id="P24480"/>
<dbReference type="Proteomes" id="UP000001811">
    <property type="component" value="Unplaced"/>
</dbReference>
<dbReference type="GO" id="GO:0005737">
    <property type="term" value="C:cytoplasm"/>
    <property type="evidence" value="ECO:0007669"/>
    <property type="project" value="UniProtKB-SubCell"/>
</dbReference>
<dbReference type="GO" id="GO:0005615">
    <property type="term" value="C:extracellular space"/>
    <property type="evidence" value="ECO:0007669"/>
    <property type="project" value="TreeGrafter"/>
</dbReference>
<dbReference type="GO" id="GO:0005634">
    <property type="term" value="C:nucleus"/>
    <property type="evidence" value="ECO:0007669"/>
    <property type="project" value="UniProtKB-SubCell"/>
</dbReference>
<dbReference type="GO" id="GO:0005509">
    <property type="term" value="F:calcium ion binding"/>
    <property type="evidence" value="ECO:0007669"/>
    <property type="project" value="InterPro"/>
</dbReference>
<dbReference type="GO" id="GO:0048306">
    <property type="term" value="F:calcium-dependent protein binding"/>
    <property type="evidence" value="ECO:0007669"/>
    <property type="project" value="InterPro"/>
</dbReference>
<dbReference type="GO" id="GO:0044548">
    <property type="term" value="F:S100 protein binding"/>
    <property type="evidence" value="ECO:0007669"/>
    <property type="project" value="TreeGrafter"/>
</dbReference>
<dbReference type="GO" id="GO:0042127">
    <property type="term" value="P:regulation of cell population proliferation"/>
    <property type="evidence" value="ECO:0007669"/>
    <property type="project" value="InterPro"/>
</dbReference>
<dbReference type="CDD" id="cd05023">
    <property type="entry name" value="S-100A11"/>
    <property type="match status" value="1"/>
</dbReference>
<dbReference type="FunFam" id="1.10.238.10:FF:000188">
    <property type="entry name" value="Protein S100"/>
    <property type="match status" value="1"/>
</dbReference>
<dbReference type="Gene3D" id="1.10.238.10">
    <property type="entry name" value="EF-hand"/>
    <property type="match status" value="1"/>
</dbReference>
<dbReference type="InterPro" id="IPR011992">
    <property type="entry name" value="EF-hand-dom_pair"/>
</dbReference>
<dbReference type="InterPro" id="IPR018247">
    <property type="entry name" value="EF_Hand_1_Ca_BS"/>
</dbReference>
<dbReference type="InterPro" id="IPR002048">
    <property type="entry name" value="EF_hand_dom"/>
</dbReference>
<dbReference type="InterPro" id="IPR001751">
    <property type="entry name" value="S100/CaBP7/8-like_CS"/>
</dbReference>
<dbReference type="InterPro" id="IPR013787">
    <property type="entry name" value="S100_Ca-bd_sub"/>
</dbReference>
<dbReference type="InterPro" id="IPR028482">
    <property type="entry name" value="S100A11"/>
</dbReference>
<dbReference type="PANTHER" id="PTHR11639:SF60">
    <property type="entry name" value="PROTEIN S100-A11"/>
    <property type="match status" value="1"/>
</dbReference>
<dbReference type="PANTHER" id="PTHR11639">
    <property type="entry name" value="S100 CALCIUM-BINDING PROTEIN"/>
    <property type="match status" value="1"/>
</dbReference>
<dbReference type="Pfam" id="PF00036">
    <property type="entry name" value="EF-hand_1"/>
    <property type="match status" value="1"/>
</dbReference>
<dbReference type="Pfam" id="PF01023">
    <property type="entry name" value="S_100"/>
    <property type="match status" value="1"/>
</dbReference>
<dbReference type="SMART" id="SM00054">
    <property type="entry name" value="EFh"/>
    <property type="match status" value="1"/>
</dbReference>
<dbReference type="SMART" id="SM01394">
    <property type="entry name" value="S_100"/>
    <property type="match status" value="1"/>
</dbReference>
<dbReference type="SUPFAM" id="SSF47473">
    <property type="entry name" value="EF-hand"/>
    <property type="match status" value="1"/>
</dbReference>
<dbReference type="PROSITE" id="PS00018">
    <property type="entry name" value="EF_HAND_1"/>
    <property type="match status" value="1"/>
</dbReference>
<dbReference type="PROSITE" id="PS50222">
    <property type="entry name" value="EF_HAND_2"/>
    <property type="match status" value="1"/>
</dbReference>
<dbReference type="PROSITE" id="PS00303">
    <property type="entry name" value="S100_CABP"/>
    <property type="match status" value="1"/>
</dbReference>
<comment type="function">
    <text evidence="1">Facilitates the differentiation and the cornification of keratinocytes.</text>
</comment>
<comment type="subunit">
    <text evidence="1">Homodimer; disulfide-linked.</text>
</comment>
<comment type="subcellular location">
    <subcellularLocation>
        <location>Cytoplasm</location>
    </subcellularLocation>
    <subcellularLocation>
        <location evidence="1">Nucleus</location>
    </subcellularLocation>
</comment>
<comment type="tissue specificity">
    <text>Smooth muscle and non-muscle tissues.</text>
</comment>
<comment type="PTM">
    <text evidence="1">Phosphorylation at Thr-7 significantly suppresses homodimerization and promotes association with NCL/nucleolin which induces nuclear translocation.</text>
</comment>
<comment type="miscellaneous">
    <text evidence="1">Binds two calcium ions per molecule with an affinity similar to that of the S100 proteins.</text>
</comment>
<comment type="similarity">
    <text evidence="5">Belongs to the S-100 family.</text>
</comment>
<name>S10AB_RABIT</name>
<sequence>MSRPTETERCIESLIAVFQKYAGKDGHSVTLSKTEFLSFMNTELAAFTKNQKDPGVLDRMMKKLDLNSDGQLDFQEFLNLIGGLAVACHESFVKAAPPQKRF</sequence>
<reference key="1">
    <citation type="journal article" date="1991" name="Biochem. Biophys. Res. Commun.">
        <title>Molecular cloning and sequencing of a cDNA clone encoding a new calcium binding protein, named calgizzarin, from rabbit lung.</title>
        <authorList>
            <person name="Watanabe M."/>
            <person name="Ando Y."/>
            <person name="Todoroki H."/>
            <person name="Minami H."/>
            <person name="Hiroyoshi H."/>
        </authorList>
    </citation>
    <scope>NUCLEOTIDE SEQUENCE [MRNA]</scope>
    <source>
        <tissue>Lung</tissue>
    </source>
</reference>
<reference key="2">
    <citation type="journal article" date="1991" name="J. Biol. Chem.">
        <title>Purification, characterization, and partial sequence analysis of a newly identified EF-hand type 13-kDa Ca(2+)-binding protein from smooth muscle and non-muscle tissues.</title>
        <authorList>
            <person name="Todoroki H."/>
            <person name="Kobayashi R."/>
            <person name="Watanabe M."/>
            <person name="Minami H."/>
            <person name="Hidaka H."/>
        </authorList>
    </citation>
    <scope>PROTEIN SEQUENCE OF 35-49 AND 53-62</scope>
    <source>
        <tissue>Lung</tissue>
    </source>
</reference>
<feature type="chain" id="PRO_0000144012" description="Protein S100-A11">
    <location>
        <begin position="1"/>
        <end position="102"/>
    </location>
</feature>
<feature type="domain" description="EF-hand 1" evidence="5">
    <location>
        <begin position="12"/>
        <end position="47"/>
    </location>
</feature>
<feature type="domain" description="EF-hand 2" evidence="4">
    <location>
        <begin position="52"/>
        <end position="87"/>
    </location>
</feature>
<feature type="binding site" evidence="5">
    <location>
        <position position="28"/>
    </location>
    <ligand>
        <name>Ca(2+)</name>
        <dbReference type="ChEBI" id="CHEBI:29108"/>
        <label>1</label>
        <note>low affinity</note>
    </ligand>
</feature>
<feature type="binding site" evidence="5">
    <location>
        <position position="30"/>
    </location>
    <ligand>
        <name>Ca(2+)</name>
        <dbReference type="ChEBI" id="CHEBI:29108"/>
        <label>1</label>
        <note>low affinity</note>
    </ligand>
</feature>
<feature type="binding site" evidence="5">
    <location>
        <position position="35"/>
    </location>
    <ligand>
        <name>Ca(2+)</name>
        <dbReference type="ChEBI" id="CHEBI:29108"/>
        <label>1</label>
        <note>low affinity</note>
    </ligand>
</feature>
<feature type="binding site" evidence="4">
    <location>
        <position position="65"/>
    </location>
    <ligand>
        <name>Ca(2+)</name>
        <dbReference type="ChEBI" id="CHEBI:29108"/>
        <label>2</label>
        <note>high affinity</note>
    </ligand>
</feature>
<feature type="binding site" evidence="4">
    <location>
        <position position="67"/>
    </location>
    <ligand>
        <name>Ca(2+)</name>
        <dbReference type="ChEBI" id="CHEBI:29108"/>
        <label>2</label>
        <note>high affinity</note>
    </ligand>
</feature>
<feature type="binding site" evidence="4">
    <location>
        <position position="69"/>
    </location>
    <ligand>
        <name>Ca(2+)</name>
        <dbReference type="ChEBI" id="CHEBI:29108"/>
        <label>2</label>
        <note>high affinity</note>
    </ligand>
</feature>
<feature type="binding site" evidence="4">
    <location>
        <position position="71"/>
    </location>
    <ligand>
        <name>Ca(2+)</name>
        <dbReference type="ChEBI" id="CHEBI:29108"/>
        <label>2</label>
        <note>high affinity</note>
    </ligand>
</feature>
<feature type="binding site" evidence="4">
    <location>
        <position position="76"/>
    </location>
    <ligand>
        <name>Ca(2+)</name>
        <dbReference type="ChEBI" id="CHEBI:29108"/>
        <label>2</label>
        <note>high affinity</note>
    </ligand>
</feature>
<feature type="modified residue" description="Phosphoserine" evidence="2">
    <location>
        <position position="2"/>
    </location>
</feature>
<feature type="modified residue" description="Phosphothreonine" evidence="2">
    <location>
        <position position="7"/>
    </location>
</feature>
<feature type="modified residue" description="N6-acetyllysine" evidence="3">
    <location>
        <position position="24"/>
    </location>
</feature>
<feature type="disulfide bond" description="Interchain" evidence="1">
    <location>
        <position position="10"/>
    </location>
</feature>
<feature type="sequence conflict" description="In Ref. 2; AA sequence." evidence="5" ref="2">
    <original>R</original>
    <variation>Y</variation>
    <location>
        <position position="59"/>
    </location>
</feature>
<feature type="helix" evidence="6">
    <location>
        <begin position="6"/>
        <end position="21"/>
    </location>
</feature>
<feature type="helix" evidence="6">
    <location>
        <begin position="33"/>
        <end position="43"/>
    </location>
</feature>
<feature type="helix" evidence="6">
    <location>
        <begin position="45"/>
        <end position="48"/>
    </location>
</feature>
<feature type="helix" evidence="6">
    <location>
        <begin position="49"/>
        <end position="51"/>
    </location>
</feature>
<feature type="turn" evidence="6">
    <location>
        <begin position="54"/>
        <end position="56"/>
    </location>
</feature>
<feature type="helix" evidence="6">
    <location>
        <begin position="57"/>
        <end position="63"/>
    </location>
</feature>
<feature type="helix" evidence="6">
    <location>
        <begin position="75"/>
        <end position="86"/>
    </location>
</feature>
<feature type="helix" evidence="6">
    <location>
        <begin position="90"/>
        <end position="92"/>
    </location>
</feature>
<feature type="turn" evidence="6">
    <location>
        <begin position="93"/>
        <end position="95"/>
    </location>
</feature>
<feature type="helix" evidence="6">
    <location>
        <begin position="97"/>
        <end position="99"/>
    </location>
</feature>